<proteinExistence type="evidence at transcript level"/>
<protein>
    <recommendedName>
        <fullName evidence="4">Salivary protein 15 Ipac-1</fullName>
        <shortName evidence="4">Salp15 Ipac-1</shortName>
    </recommendedName>
</protein>
<reference evidence="7" key="1">
    <citation type="journal article" date="2009" name="J. Med. Entomol.">
        <title>Molecular identification of Salp15, a key salivary gland protein in the transmission of lyme disease spirochetes, from Ixodes persulcatus and Ixodes pacificus (Acari: Ixodidae).</title>
        <authorList>
            <person name="Hojgaard A."/>
            <person name="Biketov S.F."/>
            <person name="Shtannikov A.V."/>
            <person name="Zeidner N.S."/>
            <person name="Piesman J."/>
        </authorList>
    </citation>
    <scope>NUCLEOTIDE SEQUENCE [MRNA]</scope>
    <source>
        <tissue>Salivary gland</tissue>
    </source>
</reference>
<name>SP151_IXOPA</name>
<evidence type="ECO:0000250" key="1">
    <source>
        <dbReference type="UniProtKB" id="A8CZZ0"/>
    </source>
</evidence>
<evidence type="ECO:0000250" key="2">
    <source>
        <dbReference type="UniProtKB" id="Q95WZ4"/>
    </source>
</evidence>
<evidence type="ECO:0000255" key="3">
    <source>
        <dbReference type="PROSITE-ProRule" id="PRU00498"/>
    </source>
</evidence>
<evidence type="ECO:0000303" key="4">
    <source>
    </source>
</evidence>
<evidence type="ECO:0000305" key="5"/>
<evidence type="ECO:0000305" key="6">
    <source>
    </source>
</evidence>
<evidence type="ECO:0000312" key="7">
    <source>
        <dbReference type="EMBL" id="ACV32166.1"/>
    </source>
</evidence>
<dbReference type="EMBL" id="GQ221868">
    <property type="protein sequence ID" value="ACV32166.1"/>
    <property type="molecule type" value="mRNA"/>
</dbReference>
<dbReference type="SMR" id="C8BKF2"/>
<dbReference type="GO" id="GO:0005576">
    <property type="term" value="C:extracellular region"/>
    <property type="evidence" value="ECO:0007669"/>
    <property type="project" value="UniProtKB-SubCell"/>
</dbReference>
<dbReference type="InterPro" id="IPR021971">
    <property type="entry name" value="Salp15"/>
</dbReference>
<dbReference type="Pfam" id="PF12115">
    <property type="entry name" value="Salp15"/>
    <property type="match status" value="1"/>
</dbReference>
<feature type="signal peptide" evidence="2">
    <location>
        <begin position="1"/>
        <end position="15"/>
    </location>
</feature>
<feature type="chain" id="PRO_5002987446" description="Salivary protein 15 Ipac-1" evidence="2">
    <location>
        <begin position="16"/>
        <end position="125"/>
    </location>
</feature>
<feature type="region of interest" description="CD4-binding" evidence="2">
    <location>
        <begin position="106"/>
        <end position="125"/>
    </location>
</feature>
<feature type="glycosylation site" description="N-linked (GlcNAc...) asparagine" evidence="3">
    <location>
        <position position="82"/>
    </location>
</feature>
<feature type="glycosylation site" description="N-linked (GlcNAc...) asparagine" evidence="3">
    <location>
        <position position="94"/>
    </location>
</feature>
<keyword id="KW-0325">Glycoprotein</keyword>
<keyword id="KW-0964">Secreted</keyword>
<keyword id="KW-0732">Signal</keyword>
<sequence length="125" mass="13523">MKVVCIILLFGIAAANVSATNKAGSSKNAKDTEGKKEILRFPRFIPNPKELATKLLDICKEHEKDSPSSYTAINDKHLDFKNCTFLCKHGPHKNVTLALPEETPCGPSGQTCADKSKCVGHIPGC</sequence>
<comment type="function">
    <text evidence="1 2">Salivary tick protein that downregulates host immune system by binding to both dendritic cells, and CD4(+) T cells. Specifically binds to the CD4 coreceptor on T cells. This interaction prevents the activation of the Src kinase, Lck, and its downstream substrate Zap-70, and results in deficient activation of PLCgamma1, the repression of calcium fluxes triggered by T-cell antigen receptor (TCR) ligation, and a subsequent reduction in interleukin-2 production. This salivary protein also binds to DC-SIGN (CD209) on dendritic cells (DC) and activates the Raf-1 kinase/MEK signaling pathway that results in down-regulating expression of pro-inflammatory cytokines. Furthermore, it inhibits T cell proliferation induced by DCs (By similarity). It also inhibits in vitro keratinocyte inflammation induced by Borrelia burgdorferi or by the major outer surface protein (OspC) of Borrelia. In addition, it downregulates chemokines and monocyte chemoattractant protein 1, as well as several antimicrobial peptides such as defensins, cathelicidin, psoriasin, and RNase 7 (By similarity). Apart from its immunomodulatory activities, it is also associated with protection of Borrelia spirochetes from antibody-mediated killing through its binding to OspC. In vivo, tests on different immune disease animal models show promising therapeutic results, e.g., in inhibiting HIV infection, experimental autoimmune encephalomyelitis, transplantation rejection, and asthma (By similarity).</text>
</comment>
<comment type="subunit">
    <text evidence="2">Interacts with host CD4. Interacts with host DC-SIGN (CD209). Interacts with Borrelia outer surface protein C (OspC).</text>
</comment>
<comment type="subcellular location">
    <subcellularLocation>
        <location evidence="6">Secreted</location>
    </subcellularLocation>
</comment>
<comment type="tissue specificity">
    <text evidence="6">Expressed in salivary glands.</text>
</comment>
<comment type="induction">
    <text evidence="2">By feeding (By similarity). By the presence of Borrelia burgdorferi (By similarity).</text>
</comment>
<comment type="similarity">
    <text evidence="5">Belongs to the salp15 family.</text>
</comment>
<accession>C8BKF2</accession>
<organism>
    <name type="scientific">Ixodes pacificus</name>
    <name type="common">Western black-legged tick</name>
    <dbReference type="NCBI Taxonomy" id="29930"/>
    <lineage>
        <taxon>Eukaryota</taxon>
        <taxon>Metazoa</taxon>
        <taxon>Ecdysozoa</taxon>
        <taxon>Arthropoda</taxon>
        <taxon>Chelicerata</taxon>
        <taxon>Arachnida</taxon>
        <taxon>Acari</taxon>
        <taxon>Parasitiformes</taxon>
        <taxon>Ixodida</taxon>
        <taxon>Ixodoidea</taxon>
        <taxon>Ixodidae</taxon>
        <taxon>Ixodinae</taxon>
        <taxon>Ixodes</taxon>
    </lineage>
</organism>
<gene>
    <name evidence="7" type="primary">salp15</name>
</gene>